<evidence type="ECO:0000255" key="1">
    <source>
        <dbReference type="HAMAP-Rule" id="MF_00672"/>
    </source>
</evidence>
<keyword id="KW-0997">Cell inner membrane</keyword>
<keyword id="KW-1003">Cell membrane</keyword>
<keyword id="KW-0472">Membrane</keyword>
<keyword id="KW-1185">Reference proteome</keyword>
<keyword id="KW-0812">Transmembrane</keyword>
<keyword id="KW-1133">Transmembrane helix</keyword>
<organism>
    <name type="scientific">Shewanella baltica (strain OS155 / ATCC BAA-1091)</name>
    <dbReference type="NCBI Taxonomy" id="325240"/>
    <lineage>
        <taxon>Bacteria</taxon>
        <taxon>Pseudomonadati</taxon>
        <taxon>Pseudomonadota</taxon>
        <taxon>Gammaproteobacteria</taxon>
        <taxon>Alteromonadales</taxon>
        <taxon>Shewanellaceae</taxon>
        <taxon>Shewanella</taxon>
    </lineage>
</organism>
<dbReference type="EMBL" id="CP000563">
    <property type="protein sequence ID" value="ABN59848.1"/>
    <property type="molecule type" value="Genomic_DNA"/>
</dbReference>
<dbReference type="RefSeq" id="WP_006086585.1">
    <property type="nucleotide sequence ID" value="NC_009052.1"/>
</dbReference>
<dbReference type="STRING" id="325240.Sbal_0315"/>
<dbReference type="GeneID" id="11770665"/>
<dbReference type="KEGG" id="sbl:Sbal_0315"/>
<dbReference type="HOGENOM" id="CLU_032288_0_0_6"/>
<dbReference type="OrthoDB" id="9808671at2"/>
<dbReference type="Proteomes" id="UP000001557">
    <property type="component" value="Chromosome"/>
</dbReference>
<dbReference type="GO" id="GO:0005886">
    <property type="term" value="C:plasma membrane"/>
    <property type="evidence" value="ECO:0007669"/>
    <property type="project" value="UniProtKB-SubCell"/>
</dbReference>
<dbReference type="HAMAP" id="MF_00672">
    <property type="entry name" value="UPF0761"/>
    <property type="match status" value="1"/>
</dbReference>
<dbReference type="InterPro" id="IPR023679">
    <property type="entry name" value="UPF0761_bac"/>
</dbReference>
<dbReference type="InterPro" id="IPR017039">
    <property type="entry name" value="Virul_fac_BrkB"/>
</dbReference>
<dbReference type="NCBIfam" id="NF002457">
    <property type="entry name" value="PRK01637.1"/>
    <property type="match status" value="1"/>
</dbReference>
<dbReference type="NCBIfam" id="TIGR00765">
    <property type="entry name" value="yihY_not_rbn"/>
    <property type="match status" value="1"/>
</dbReference>
<dbReference type="PANTHER" id="PTHR30213">
    <property type="entry name" value="INNER MEMBRANE PROTEIN YHJD"/>
    <property type="match status" value="1"/>
</dbReference>
<dbReference type="PANTHER" id="PTHR30213:SF0">
    <property type="entry name" value="UPF0761 MEMBRANE PROTEIN YIHY"/>
    <property type="match status" value="1"/>
</dbReference>
<dbReference type="Pfam" id="PF03631">
    <property type="entry name" value="Virul_fac_BrkB"/>
    <property type="match status" value="1"/>
</dbReference>
<dbReference type="PIRSF" id="PIRSF035875">
    <property type="entry name" value="RNase_BN"/>
    <property type="match status" value="1"/>
</dbReference>
<feature type="chain" id="PRO_1000044723" description="UPF0761 membrane protein Sbal_0315">
    <location>
        <begin position="1"/>
        <end position="323"/>
    </location>
</feature>
<feature type="transmembrane region" description="Helical" evidence="1">
    <location>
        <begin position="4"/>
        <end position="24"/>
    </location>
</feature>
<feature type="transmembrane region" description="Helical" evidence="1">
    <location>
        <begin position="45"/>
        <end position="65"/>
    </location>
</feature>
<feature type="transmembrane region" description="Helical" evidence="1">
    <location>
        <begin position="102"/>
        <end position="122"/>
    </location>
</feature>
<feature type="transmembrane region" description="Helical" evidence="1">
    <location>
        <begin position="137"/>
        <end position="157"/>
    </location>
</feature>
<feature type="transmembrane region" description="Helical" evidence="1">
    <location>
        <begin position="182"/>
        <end position="202"/>
    </location>
</feature>
<feature type="transmembrane region" description="Helical" evidence="1">
    <location>
        <begin position="213"/>
        <end position="233"/>
    </location>
</feature>
<feature type="transmembrane region" description="Helical" evidence="1">
    <location>
        <begin position="247"/>
        <end position="267"/>
    </location>
</feature>
<comment type="subcellular location">
    <subcellularLocation>
        <location evidence="1">Cell inner membrane</location>
        <topology evidence="1">Multi-pass membrane protein</topology>
    </subcellularLocation>
</comment>
<comment type="similarity">
    <text evidence="1">Belongs to the UPF0761 family.</text>
</comment>
<name>Y315_SHEB5</name>
<gene>
    <name type="ordered locus">Sbal_0315</name>
</gene>
<accession>A3CZD5</accession>
<proteinExistence type="inferred from homology"/>
<reference key="1">
    <citation type="submission" date="2007-02" db="EMBL/GenBank/DDBJ databases">
        <title>Complete sequence of chromosome of Shewanella baltica OS155.</title>
        <authorList>
            <consortium name="US DOE Joint Genome Institute"/>
            <person name="Copeland A."/>
            <person name="Lucas S."/>
            <person name="Lapidus A."/>
            <person name="Barry K."/>
            <person name="Detter J.C."/>
            <person name="Glavina del Rio T."/>
            <person name="Hammon N."/>
            <person name="Israni S."/>
            <person name="Dalin E."/>
            <person name="Tice H."/>
            <person name="Pitluck S."/>
            <person name="Sims D.R."/>
            <person name="Brettin T."/>
            <person name="Bruce D."/>
            <person name="Han C."/>
            <person name="Tapia R."/>
            <person name="Brainard J."/>
            <person name="Schmutz J."/>
            <person name="Larimer F."/>
            <person name="Land M."/>
            <person name="Hauser L."/>
            <person name="Kyrpides N."/>
            <person name="Mikhailova N."/>
            <person name="Brettar I."/>
            <person name="Klappenbach J."/>
            <person name="Konstantinidis K."/>
            <person name="Rodrigues J."/>
            <person name="Tiedje J."/>
            <person name="Richardson P."/>
        </authorList>
    </citation>
    <scope>NUCLEOTIDE SEQUENCE [LARGE SCALE GENOMIC DNA]</scope>
    <source>
        <strain>OS155 / ATCC BAA-1091</strain>
    </source>
</reference>
<protein>
    <recommendedName>
        <fullName evidence="1">UPF0761 membrane protein Sbal_0315</fullName>
    </recommendedName>
</protein>
<sequence>MTKKIELAQIRVLFLGIWHFLLHLRRRLVEDQINIRAGHLAYVTLLSLVPMVAVTMSMLSAFPVFKGIRGQIEGFVYENFLPAAGDTVQVYINEFVGNASKGTAVGIAALVVVAIMLISAIDKSLNNIWRTKEKRSVVVAFSMYWMVLTLGPVLVGASLVASSYVISLKVFEAEALSGMLPIFIARLPMLFSVAAFLLLYMVVPNQKVKFLHALLGAIVAALLFELGKKGFALYVTQFPSYEAIYGALATIPIVFVWVYLSWMIVLLGAEITAAMPEYLDYESSSDDETALNAKPLADASQGDSSSVLTSAEVTALKAVAKSE</sequence>